<protein>
    <recommendedName>
        <fullName>Beta-lactamase CARB-4</fullName>
        <ecNumber>3.5.2.6</ecNumber>
    </recommendedName>
    <alternativeName>
        <fullName>Carbenicillinase 4</fullName>
    </alternativeName>
</protein>
<proteinExistence type="inferred from homology"/>
<reference key="1">
    <citation type="journal article" date="1998" name="Antimicrob. Agents Chemother.">
        <title>Structure of CARB-4 and AER-1 carbenicillin-hydrolyzing beta-lactamases.</title>
        <authorList>
            <person name="Sanschagrin F."/>
            <person name="Bejaoui N."/>
            <person name="Levesque R.C."/>
        </authorList>
    </citation>
    <scope>NUCLEOTIDE SEQUENCE [GENOMIC DNA]</scope>
    <source>
        <strain>P83372</strain>
        <transposon>Tn1413</transposon>
    </source>
</reference>
<reference key="2">
    <citation type="journal article" date="1991" name="Biochem. J.">
        <title>A standard numbering scheme for the class A beta-lactamases.</title>
        <authorList>
            <person name="Ambler R.P."/>
            <person name="Coulson A.F."/>
            <person name="Frere J.M."/>
            <person name="Ghuysen J.M."/>
            <person name="Joris B."/>
            <person name="Forsman M."/>
            <person name="Levesque R.C."/>
            <person name="Tiraby G."/>
            <person name="Waley S.G."/>
        </authorList>
    </citation>
    <scope>AMINO ACID NUMBERING SCHEME</scope>
</reference>
<feature type="signal peptide" evidence="2">
    <location>
        <begin position="1"/>
        <end position="17"/>
    </location>
</feature>
<feature type="chain" id="PRO_0000017044" description="Beta-lactamase CARB-4">
    <location>
        <begin position="18"/>
        <end position="288"/>
    </location>
</feature>
<feature type="active site" description="Acyl-ester intermediate" evidence="3">
    <location>
        <position position="65"/>
    </location>
</feature>
<feature type="binding site" evidence="1">
    <location>
        <begin position="229"/>
        <end position="231"/>
    </location>
    <ligand>
        <name>substrate</name>
    </ligand>
</feature>
<feature type="disulfide bond" evidence="2">
    <location>
        <begin position="72"/>
        <end position="118"/>
    </location>
</feature>
<sequence>MKLLLVFSLLIPSMVFANSSKFQQVEQDAKVIEASLSAHIGISVLDTQTGEYWDYNGNQRFPLTSTFKTIACAKLLYDAEQGEINPKSTIEIKKADLVTYSPVIEKQVGQAITLDDACFATMTTSDNAAANIILNALGGPESVTDFLRQIGDKETRLDRIEPELNEGKLGDLRDTTTPNAIVNTLNELLFGSTLSQDGQKKLEYWMVNNQVTGNLLRSVLPEGWNIADRSGAGGFGARSITAVVWSEAQSPIIVSIYLAQTEASIADRNDAIVKIGRSIFEVYSSQSR</sequence>
<gene>
    <name type="primary">carB4</name>
</gene>
<comment type="function">
    <text>Hydrolyzes carbenicillin. Methicillin and oxacillin are weakly hydrolyzed.</text>
</comment>
<comment type="catalytic activity">
    <reaction evidence="3">
        <text>a beta-lactam + H2O = a substituted beta-amino acid</text>
        <dbReference type="Rhea" id="RHEA:20401"/>
        <dbReference type="ChEBI" id="CHEBI:15377"/>
        <dbReference type="ChEBI" id="CHEBI:35627"/>
        <dbReference type="ChEBI" id="CHEBI:140347"/>
        <dbReference type="EC" id="3.5.2.6"/>
    </reaction>
</comment>
<comment type="activity regulation">
    <text>Inhibited by clavulanic acid and sulbactam.</text>
</comment>
<comment type="miscellaneous">
    <text evidence="5">The class A beta-lactamase family has a specific amino-acid numbering system, sometimes called Ambler or ABL numbering and often misspelt as Amber. A multiple sequence alignment was used to derive a consensus sequence and then the consensus was numbered taking into account insertions and deletions. This allows use of identical numbers, e.g. for active site residues, despite differences in protein length. UniProt always uses natural numbering of residues, hence there appear to be differences in numbering between this entry and some papers.</text>
</comment>
<comment type="similarity">
    <text evidence="4">Belongs to the class-A beta-lactamase family.</text>
</comment>
<organism>
    <name type="scientific">Pseudomonas aeruginosa</name>
    <dbReference type="NCBI Taxonomy" id="287"/>
    <lineage>
        <taxon>Bacteria</taxon>
        <taxon>Pseudomonadati</taxon>
        <taxon>Pseudomonadota</taxon>
        <taxon>Gammaproteobacteria</taxon>
        <taxon>Pseudomonadales</taxon>
        <taxon>Pseudomonadaceae</taxon>
        <taxon>Pseudomonas</taxon>
    </lineage>
</organism>
<name>BLC4_PSEAI</name>
<evidence type="ECO:0000250" key="1"/>
<evidence type="ECO:0000255" key="2"/>
<evidence type="ECO:0000255" key="3">
    <source>
        <dbReference type="PROSITE-ProRule" id="PRU10101"/>
    </source>
</evidence>
<evidence type="ECO:0000305" key="4"/>
<evidence type="ECO:0000305" key="5">
    <source>
    </source>
</evidence>
<dbReference type="EC" id="3.5.2.6"/>
<dbReference type="EMBL" id="U14749">
    <property type="protein sequence ID" value="AAC09012.1"/>
    <property type="molecule type" value="Genomic_DNA"/>
</dbReference>
<dbReference type="SMR" id="Q51355"/>
<dbReference type="CARD" id="ARO:3002243">
    <property type="molecule name" value="CARB-4"/>
    <property type="mechanism identifier" value="ARO:0001004"/>
    <property type="mechanism name" value="antibiotic inactivation"/>
</dbReference>
<dbReference type="KEGG" id="ag:AAC09012"/>
<dbReference type="GO" id="GO:0008800">
    <property type="term" value="F:beta-lactamase activity"/>
    <property type="evidence" value="ECO:0007669"/>
    <property type="project" value="UniProtKB-EC"/>
</dbReference>
<dbReference type="GO" id="GO:0030655">
    <property type="term" value="P:beta-lactam antibiotic catabolic process"/>
    <property type="evidence" value="ECO:0007669"/>
    <property type="project" value="InterPro"/>
</dbReference>
<dbReference type="GO" id="GO:0046677">
    <property type="term" value="P:response to antibiotic"/>
    <property type="evidence" value="ECO:0007669"/>
    <property type="project" value="UniProtKB-KW"/>
</dbReference>
<dbReference type="Gene3D" id="3.40.710.10">
    <property type="entry name" value="DD-peptidase/beta-lactamase superfamily"/>
    <property type="match status" value="1"/>
</dbReference>
<dbReference type="InterPro" id="IPR012338">
    <property type="entry name" value="Beta-lactam/transpept-like"/>
</dbReference>
<dbReference type="InterPro" id="IPR045155">
    <property type="entry name" value="Beta-lactam_cat"/>
</dbReference>
<dbReference type="InterPro" id="IPR000871">
    <property type="entry name" value="Beta-lactam_class-A"/>
</dbReference>
<dbReference type="InterPro" id="IPR023650">
    <property type="entry name" value="Beta-lactam_class-A_AS"/>
</dbReference>
<dbReference type="NCBIfam" id="NF033103">
    <property type="entry name" value="bla_class_A"/>
    <property type="match status" value="1"/>
</dbReference>
<dbReference type="NCBIfam" id="NF000481">
    <property type="entry name" value="carbeni_gen"/>
    <property type="match status" value="1"/>
</dbReference>
<dbReference type="NCBIfam" id="NF000480">
    <property type="entry name" value="PSE"/>
    <property type="match status" value="1"/>
</dbReference>
<dbReference type="PANTHER" id="PTHR35333">
    <property type="entry name" value="BETA-LACTAMASE"/>
    <property type="match status" value="1"/>
</dbReference>
<dbReference type="PANTHER" id="PTHR35333:SF3">
    <property type="entry name" value="BETA-LACTAMASE-TYPE TRANSPEPTIDASE FOLD CONTAINING PROTEIN"/>
    <property type="match status" value="1"/>
</dbReference>
<dbReference type="Pfam" id="PF13354">
    <property type="entry name" value="Beta-lactamase2"/>
    <property type="match status" value="1"/>
</dbReference>
<dbReference type="PRINTS" id="PR00118">
    <property type="entry name" value="BLACTAMASEA"/>
</dbReference>
<dbReference type="SUPFAM" id="SSF56601">
    <property type="entry name" value="beta-lactamase/transpeptidase-like"/>
    <property type="match status" value="1"/>
</dbReference>
<dbReference type="PROSITE" id="PS00146">
    <property type="entry name" value="BETA_LACTAMASE_A"/>
    <property type="match status" value="1"/>
</dbReference>
<geneLocation type="plasmid">
    <name>pUD12</name>
</geneLocation>
<keyword id="KW-0046">Antibiotic resistance</keyword>
<keyword id="KW-1015">Disulfide bond</keyword>
<keyword id="KW-0378">Hydrolase</keyword>
<keyword id="KW-0614">Plasmid</keyword>
<keyword id="KW-0732">Signal</keyword>
<keyword id="KW-0814">Transposable element</keyword>
<accession>Q51355</accession>